<proteinExistence type="evidence at transcript level"/>
<evidence type="ECO:0000250" key="1"/>
<evidence type="ECO:0000255" key="2"/>
<evidence type="ECO:0000269" key="3">
    <source>
    </source>
</evidence>
<evidence type="ECO:0000269" key="4">
    <source>
    </source>
</evidence>
<evidence type="ECO:0000305" key="5"/>
<sequence>MKQLLCYLPWLLLLSLVVSPFNEARFVVEKNSLSVTSPESIKGTHDSAIGNFGIPQYGGSMAGTVVYPKENQKSCKEFSDFSISFKSQPGALPTFLLVDRGDCFFALKVWNAQKAGASAVLVADNVDEPLITMDTPEEDVSSAKYIENITIPSALVTKGFGEKLKKAISGGDMVNLNLDWREAVPHPDDRVEYELWTNSNDECGVKCDMLMEFVKDFKGAAQILEKGGFTQFRPHYITWYCPHAFTLSRQCKSQCINKGRYCAPDPEQDFSSGYDGKDVVVENLRQLCVYKVANETGKPWVWWDYVTDFQIRCPMKEKKYNKDCAESVIKSLGIDSRKIDKCMGDPDADLDNPVLKEEQDAQVGKGTRGDVTILPTLVVNNRQYRGKLEKSAVLKALCSGFEESTEPAICLSTDMETNECLDNNGGCWQDKSANITACKDTFRGKVCVCPIVDGVRFKGDGYSHCEPSGPGRCTINNGGCWHEERDGHAFSACVDKDSVKCECPPGFKGDGVKKCEDINECKEKKACQCPECSCKNTWGSYECSCSGDLLYMRDHDTCISKTGSQVKSAWAAVWLIMLSLGLAAAGAYLVYKYRLRQYMDSEIRAIMAQYMPLDSQPEVPNHTNDERA</sequence>
<gene>
    <name type="primary">VSR4</name>
    <name type="synonym">BP80A</name>
    <name type="synonym">ELP2B</name>
    <name type="ordered locus">At2g14720</name>
    <name type="ORF">F26C24.14</name>
</gene>
<organism>
    <name type="scientific">Arabidopsis thaliana</name>
    <name type="common">Mouse-ear cress</name>
    <dbReference type="NCBI Taxonomy" id="3702"/>
    <lineage>
        <taxon>Eukaryota</taxon>
        <taxon>Viridiplantae</taxon>
        <taxon>Streptophyta</taxon>
        <taxon>Embryophyta</taxon>
        <taxon>Tracheophyta</taxon>
        <taxon>Spermatophyta</taxon>
        <taxon>Magnoliopsida</taxon>
        <taxon>eudicotyledons</taxon>
        <taxon>Gunneridae</taxon>
        <taxon>Pentapetalae</taxon>
        <taxon>rosids</taxon>
        <taxon>malvids</taxon>
        <taxon>Brassicales</taxon>
        <taxon>Brassicaceae</taxon>
        <taxon>Camelineae</taxon>
        <taxon>Arabidopsis</taxon>
    </lineage>
</organism>
<comment type="function">
    <text evidence="1">Vacuolar-sorting receptor (VSR) involved in clathrin-coated vesicles sorting from Golgi apparatus to vacuoles.</text>
</comment>
<comment type="subcellular location">
    <subcellularLocation>
        <location evidence="1">Membrane</location>
        <topology evidence="1">Single-pass type I membrane protein</topology>
    </subcellularLocation>
    <subcellularLocation>
        <location evidence="1">Golgi apparatus membrane</location>
        <topology evidence="1">Single-pass type I membrane protein</topology>
    </subcellularLocation>
    <subcellularLocation>
        <location evidence="1">Cytoplasmic vesicle</location>
        <location evidence="1">Clathrin-coated vesicle membrane</location>
        <topology evidence="1">Single-pass type I membrane protein</topology>
    </subcellularLocation>
    <subcellularLocation>
        <location evidence="1">Prevacuolar compartment membrane</location>
        <topology evidence="1">Single-pass type I membrane protein</topology>
    </subcellularLocation>
</comment>
<comment type="tissue specificity">
    <text evidence="3 4">Expressed at low levels in seeds, seedlings, roots, stems, leaves, flowers and siliques.</text>
</comment>
<comment type="domain">
    <text evidence="1">The tyrosine-based internalization signal may be involved in trafficking at the TGN.</text>
</comment>
<comment type="similarity">
    <text evidence="5">Belongs to the VSR (BP-80) family.</text>
</comment>
<keyword id="KW-0106">Calcium</keyword>
<keyword id="KW-0968">Cytoplasmic vesicle</keyword>
<keyword id="KW-1015">Disulfide bond</keyword>
<keyword id="KW-0245">EGF-like domain</keyword>
<keyword id="KW-0325">Glycoprotein</keyword>
<keyword id="KW-0333">Golgi apparatus</keyword>
<keyword id="KW-0472">Membrane</keyword>
<keyword id="KW-0653">Protein transport</keyword>
<keyword id="KW-1185">Reference proteome</keyword>
<keyword id="KW-0677">Repeat</keyword>
<keyword id="KW-0732">Signal</keyword>
<keyword id="KW-0812">Transmembrane</keyword>
<keyword id="KW-1133">Transmembrane helix</keyword>
<keyword id="KW-0813">Transport</keyword>
<accession>Q56ZQ3</accession>
<accession>O80979</accession>
<feature type="signal peptide" evidence="2">
    <location>
        <begin position="1"/>
        <end position="24"/>
    </location>
</feature>
<feature type="chain" id="PRO_0000036466" description="Vacuolar-sorting receptor 4">
    <location>
        <begin position="25"/>
        <end position="628"/>
    </location>
</feature>
<feature type="topological domain" description="Lumenal" evidence="2">
    <location>
        <begin position="25"/>
        <end position="569"/>
    </location>
</feature>
<feature type="transmembrane region" description="Helical" evidence="2">
    <location>
        <begin position="570"/>
        <end position="590"/>
    </location>
</feature>
<feature type="topological domain" description="Cytoplasmic" evidence="2">
    <location>
        <begin position="591"/>
        <end position="628"/>
    </location>
</feature>
<feature type="domain" description="PA">
    <location>
        <begin position="56"/>
        <end position="168"/>
    </location>
</feature>
<feature type="domain" description="EGF-like 1">
    <location>
        <begin position="416"/>
        <end position="466"/>
    </location>
</feature>
<feature type="domain" description="EGF-like 2">
    <location>
        <begin position="469"/>
        <end position="516"/>
    </location>
</feature>
<feature type="domain" description="EGF-like 3; calcium-binding" evidence="2">
    <location>
        <begin position="517"/>
        <end position="559"/>
    </location>
</feature>
<feature type="short sequence motif" description="Tyrosine-based internalization motif" evidence="1">
    <location>
        <begin position="610"/>
        <end position="613"/>
    </location>
</feature>
<feature type="glycosylation site" description="N-linked (GlcNAc...) asparagine" evidence="2">
    <location>
        <position position="148"/>
    </location>
</feature>
<feature type="glycosylation site" description="N-linked (GlcNAc...) asparagine" evidence="2">
    <location>
        <position position="294"/>
    </location>
</feature>
<feature type="glycosylation site" description="N-linked (GlcNAc...) asparagine" evidence="2">
    <location>
        <position position="434"/>
    </location>
</feature>
<feature type="disulfide bond" evidence="1">
    <location>
        <begin position="420"/>
        <end position="438"/>
    </location>
</feature>
<feature type="disulfide bond" evidence="1">
    <location>
        <begin position="427"/>
        <end position="447"/>
    </location>
</feature>
<feature type="disulfide bond" evidence="1">
    <location>
        <begin position="449"/>
        <end position="465"/>
    </location>
</feature>
<feature type="disulfide bond" evidence="1">
    <location>
        <begin position="473"/>
        <end position="493"/>
    </location>
</feature>
<feature type="disulfide bond" evidence="1">
    <location>
        <begin position="480"/>
        <end position="501"/>
    </location>
</feature>
<feature type="disulfide bond" evidence="1">
    <location>
        <begin position="503"/>
        <end position="515"/>
    </location>
</feature>
<feature type="disulfide bond" evidence="1">
    <location>
        <begin position="545"/>
        <end position="558"/>
    </location>
</feature>
<dbReference type="EMBL" id="AC004705">
    <property type="protein sequence ID" value="AAC24185.1"/>
    <property type="molecule type" value="Genomic_DNA"/>
</dbReference>
<dbReference type="EMBL" id="AC005398">
    <property type="protein sequence ID" value="AAM15052.1"/>
    <property type="molecule type" value="Genomic_DNA"/>
</dbReference>
<dbReference type="EMBL" id="CP002685">
    <property type="protein sequence ID" value="AEC06326.1"/>
    <property type="molecule type" value="Genomic_DNA"/>
</dbReference>
<dbReference type="EMBL" id="CP002685">
    <property type="protein sequence ID" value="AEC06327.1"/>
    <property type="molecule type" value="Genomic_DNA"/>
</dbReference>
<dbReference type="EMBL" id="AY062744">
    <property type="protein sequence ID" value="AAL32822.1"/>
    <property type="molecule type" value="mRNA"/>
</dbReference>
<dbReference type="EMBL" id="BT008390">
    <property type="protein sequence ID" value="AAP37749.1"/>
    <property type="molecule type" value="mRNA"/>
</dbReference>
<dbReference type="EMBL" id="AK220910">
    <property type="protein sequence ID" value="BAD94353.1"/>
    <property type="molecule type" value="mRNA"/>
</dbReference>
<dbReference type="PIR" id="T02604">
    <property type="entry name" value="T02604"/>
</dbReference>
<dbReference type="RefSeq" id="NP_179079.1">
    <property type="nucleotide sequence ID" value="NM_127036.5"/>
</dbReference>
<dbReference type="RefSeq" id="NP_849954.1">
    <property type="nucleotide sequence ID" value="NM_179623.2"/>
</dbReference>
<dbReference type="SMR" id="Q56ZQ3"/>
<dbReference type="FunCoup" id="Q56ZQ3">
    <property type="interactions" value="1620"/>
</dbReference>
<dbReference type="STRING" id="3702.Q56ZQ3"/>
<dbReference type="GlyCosmos" id="Q56ZQ3">
    <property type="glycosylation" value="3 sites, No reported glycans"/>
</dbReference>
<dbReference type="GlyGen" id="Q56ZQ3">
    <property type="glycosylation" value="3 sites"/>
</dbReference>
<dbReference type="PaxDb" id="3702-AT2G14720.2"/>
<dbReference type="ProteomicsDB" id="242742"/>
<dbReference type="EnsemblPlants" id="AT2G14720.1">
    <property type="protein sequence ID" value="AT2G14720.1"/>
    <property type="gene ID" value="AT2G14720"/>
</dbReference>
<dbReference type="EnsemblPlants" id="AT2G14720.2">
    <property type="protein sequence ID" value="AT2G14720.2"/>
    <property type="gene ID" value="AT2G14720"/>
</dbReference>
<dbReference type="GeneID" id="815960"/>
<dbReference type="Gramene" id="AT2G14720.1">
    <property type="protein sequence ID" value="AT2G14720.1"/>
    <property type="gene ID" value="AT2G14720"/>
</dbReference>
<dbReference type="Gramene" id="AT2G14720.2">
    <property type="protein sequence ID" value="AT2G14720.2"/>
    <property type="gene ID" value="AT2G14720"/>
</dbReference>
<dbReference type="KEGG" id="ath:AT2G14720"/>
<dbReference type="Araport" id="AT2G14720"/>
<dbReference type="TAIR" id="AT2G14720">
    <property type="gene designation" value="VSR4"/>
</dbReference>
<dbReference type="eggNOG" id="ENOG502QSX2">
    <property type="taxonomic scope" value="Eukaryota"/>
</dbReference>
<dbReference type="HOGENOM" id="CLU_031082_1_0_1"/>
<dbReference type="InParanoid" id="Q56ZQ3"/>
<dbReference type="OMA" id="VCPIVDG"/>
<dbReference type="PhylomeDB" id="Q56ZQ3"/>
<dbReference type="CD-CODE" id="4299E36E">
    <property type="entry name" value="Nucleolus"/>
</dbReference>
<dbReference type="PRO" id="PR:Q56ZQ3"/>
<dbReference type="Proteomes" id="UP000006548">
    <property type="component" value="Chromosome 2"/>
</dbReference>
<dbReference type="ExpressionAtlas" id="Q56ZQ3">
    <property type="expression patterns" value="baseline and differential"/>
</dbReference>
<dbReference type="GO" id="GO:0030665">
    <property type="term" value="C:clathrin-coated vesicle membrane"/>
    <property type="evidence" value="ECO:0007669"/>
    <property type="project" value="UniProtKB-SubCell"/>
</dbReference>
<dbReference type="GO" id="GO:0005768">
    <property type="term" value="C:endosome"/>
    <property type="evidence" value="ECO:0007005"/>
    <property type="project" value="TAIR"/>
</dbReference>
<dbReference type="GO" id="GO:0005794">
    <property type="term" value="C:Golgi apparatus"/>
    <property type="evidence" value="ECO:0007005"/>
    <property type="project" value="TAIR"/>
</dbReference>
<dbReference type="GO" id="GO:0000139">
    <property type="term" value="C:Golgi membrane"/>
    <property type="evidence" value="ECO:0007669"/>
    <property type="project" value="UniProtKB-SubCell"/>
</dbReference>
<dbReference type="GO" id="GO:0005739">
    <property type="term" value="C:mitochondrion"/>
    <property type="evidence" value="ECO:0007005"/>
    <property type="project" value="TAIR"/>
</dbReference>
<dbReference type="GO" id="GO:0000325">
    <property type="term" value="C:plant-type vacuole"/>
    <property type="evidence" value="ECO:0007005"/>
    <property type="project" value="TAIR"/>
</dbReference>
<dbReference type="GO" id="GO:0005802">
    <property type="term" value="C:trans-Golgi network"/>
    <property type="evidence" value="ECO:0007005"/>
    <property type="project" value="TAIR"/>
</dbReference>
<dbReference type="GO" id="GO:0005509">
    <property type="term" value="F:calcium ion binding"/>
    <property type="evidence" value="ECO:0007669"/>
    <property type="project" value="InterPro"/>
</dbReference>
<dbReference type="GO" id="GO:0006623">
    <property type="term" value="P:protein targeting to vacuole"/>
    <property type="evidence" value="ECO:0000316"/>
    <property type="project" value="TAIR"/>
</dbReference>
<dbReference type="CDD" id="cd00054">
    <property type="entry name" value="EGF_CA"/>
    <property type="match status" value="1"/>
</dbReference>
<dbReference type="CDD" id="cd02125">
    <property type="entry name" value="PA_VSR"/>
    <property type="match status" value="1"/>
</dbReference>
<dbReference type="FunFam" id="3.50.30.30:FF:000001">
    <property type="entry name" value="Vacuolar-sorting receptor 1"/>
    <property type="match status" value="1"/>
</dbReference>
<dbReference type="FunFam" id="2.10.25.10:FF:000178">
    <property type="entry name" value="vacuolar-sorting receptor 1"/>
    <property type="match status" value="1"/>
</dbReference>
<dbReference type="Gene3D" id="3.50.30.30">
    <property type="match status" value="1"/>
</dbReference>
<dbReference type="Gene3D" id="2.10.25.10">
    <property type="entry name" value="Laminin"/>
    <property type="match status" value="3"/>
</dbReference>
<dbReference type="InterPro" id="IPR026823">
    <property type="entry name" value="cEGF"/>
</dbReference>
<dbReference type="InterPro" id="IPR001881">
    <property type="entry name" value="EGF-like_Ca-bd_dom"/>
</dbReference>
<dbReference type="InterPro" id="IPR000742">
    <property type="entry name" value="EGF-like_dom"/>
</dbReference>
<dbReference type="InterPro" id="IPR018097">
    <property type="entry name" value="EGF_Ca-bd_CS"/>
</dbReference>
<dbReference type="InterPro" id="IPR046450">
    <property type="entry name" value="PA_dom_sf"/>
</dbReference>
<dbReference type="InterPro" id="IPR003137">
    <property type="entry name" value="PA_domain"/>
</dbReference>
<dbReference type="InterPro" id="IPR056858">
    <property type="entry name" value="VSR_TRX"/>
</dbReference>
<dbReference type="PANTHER" id="PTHR22702">
    <property type="entry name" value="PROTEASE-ASSOCIATED DOMAIN-CONTAINING PROTEIN"/>
    <property type="match status" value="1"/>
</dbReference>
<dbReference type="PANTHER" id="PTHR22702:SF1">
    <property type="entry name" value="PROTEASE-ASSOCIATED DOMAIN-CONTAINING PROTEIN 1"/>
    <property type="match status" value="1"/>
</dbReference>
<dbReference type="Pfam" id="PF12662">
    <property type="entry name" value="cEGF"/>
    <property type="match status" value="1"/>
</dbReference>
<dbReference type="Pfam" id="PF02225">
    <property type="entry name" value="PA"/>
    <property type="match status" value="1"/>
</dbReference>
<dbReference type="Pfam" id="PF25011">
    <property type="entry name" value="VSR_TRX"/>
    <property type="match status" value="1"/>
</dbReference>
<dbReference type="SMART" id="SM00179">
    <property type="entry name" value="EGF_CA"/>
    <property type="match status" value="1"/>
</dbReference>
<dbReference type="SUPFAM" id="SSF52025">
    <property type="entry name" value="PA domain"/>
    <property type="match status" value="1"/>
</dbReference>
<dbReference type="PROSITE" id="PS00010">
    <property type="entry name" value="ASX_HYDROXYL"/>
    <property type="match status" value="1"/>
</dbReference>
<dbReference type="PROSITE" id="PS01186">
    <property type="entry name" value="EGF_2"/>
    <property type="match status" value="1"/>
</dbReference>
<dbReference type="PROSITE" id="PS01187">
    <property type="entry name" value="EGF_CA"/>
    <property type="match status" value="1"/>
</dbReference>
<name>VSR4_ARATH</name>
<reference key="1">
    <citation type="journal article" date="1999" name="Nature">
        <title>Sequence and analysis of chromosome 2 of the plant Arabidopsis thaliana.</title>
        <authorList>
            <person name="Lin X."/>
            <person name="Kaul S."/>
            <person name="Rounsley S.D."/>
            <person name="Shea T.P."/>
            <person name="Benito M.-I."/>
            <person name="Town C.D."/>
            <person name="Fujii C.Y."/>
            <person name="Mason T.M."/>
            <person name="Bowman C.L."/>
            <person name="Barnstead M.E."/>
            <person name="Feldblyum T.V."/>
            <person name="Buell C.R."/>
            <person name="Ketchum K.A."/>
            <person name="Lee J.J."/>
            <person name="Ronning C.M."/>
            <person name="Koo H.L."/>
            <person name="Moffat K.S."/>
            <person name="Cronin L.A."/>
            <person name="Shen M."/>
            <person name="Pai G."/>
            <person name="Van Aken S."/>
            <person name="Umayam L."/>
            <person name="Tallon L.J."/>
            <person name="Gill J.E."/>
            <person name="Adams M.D."/>
            <person name="Carrera A.J."/>
            <person name="Creasy T.H."/>
            <person name="Goodman H.M."/>
            <person name="Somerville C.R."/>
            <person name="Copenhaver G.P."/>
            <person name="Preuss D."/>
            <person name="Nierman W.C."/>
            <person name="White O."/>
            <person name="Eisen J.A."/>
            <person name="Salzberg S.L."/>
            <person name="Fraser C.M."/>
            <person name="Venter J.C."/>
        </authorList>
    </citation>
    <scope>NUCLEOTIDE SEQUENCE [LARGE SCALE GENOMIC DNA]</scope>
    <source>
        <strain>cv. Columbia</strain>
    </source>
</reference>
<reference key="2">
    <citation type="journal article" date="2017" name="Plant J.">
        <title>Araport11: a complete reannotation of the Arabidopsis thaliana reference genome.</title>
        <authorList>
            <person name="Cheng C.Y."/>
            <person name="Krishnakumar V."/>
            <person name="Chan A.P."/>
            <person name="Thibaud-Nissen F."/>
            <person name="Schobel S."/>
            <person name="Town C.D."/>
        </authorList>
    </citation>
    <scope>GENOME REANNOTATION</scope>
    <source>
        <strain>cv. Columbia</strain>
    </source>
</reference>
<reference key="3">
    <citation type="journal article" date="2003" name="Science">
        <title>Empirical analysis of transcriptional activity in the Arabidopsis genome.</title>
        <authorList>
            <person name="Yamada K."/>
            <person name="Lim J."/>
            <person name="Dale J.M."/>
            <person name="Chen H."/>
            <person name="Shinn P."/>
            <person name="Palm C.J."/>
            <person name="Southwick A.M."/>
            <person name="Wu H.C."/>
            <person name="Kim C.J."/>
            <person name="Nguyen M."/>
            <person name="Pham P.K."/>
            <person name="Cheuk R.F."/>
            <person name="Karlin-Newmann G."/>
            <person name="Liu S.X."/>
            <person name="Lam B."/>
            <person name="Sakano H."/>
            <person name="Wu T."/>
            <person name="Yu G."/>
            <person name="Miranda M."/>
            <person name="Quach H.L."/>
            <person name="Tripp M."/>
            <person name="Chang C.H."/>
            <person name="Lee J.M."/>
            <person name="Toriumi M.J."/>
            <person name="Chan M.M."/>
            <person name="Tang C.C."/>
            <person name="Onodera C.S."/>
            <person name="Deng J.M."/>
            <person name="Akiyama K."/>
            <person name="Ansari Y."/>
            <person name="Arakawa T."/>
            <person name="Banh J."/>
            <person name="Banno F."/>
            <person name="Bowser L."/>
            <person name="Brooks S.Y."/>
            <person name="Carninci P."/>
            <person name="Chao Q."/>
            <person name="Choy N."/>
            <person name="Enju A."/>
            <person name="Goldsmith A.D."/>
            <person name="Gurjal M."/>
            <person name="Hansen N.F."/>
            <person name="Hayashizaki Y."/>
            <person name="Johnson-Hopson C."/>
            <person name="Hsuan V.W."/>
            <person name="Iida K."/>
            <person name="Karnes M."/>
            <person name="Khan S."/>
            <person name="Koesema E."/>
            <person name="Ishida J."/>
            <person name="Jiang P.X."/>
            <person name="Jones T."/>
            <person name="Kawai J."/>
            <person name="Kamiya A."/>
            <person name="Meyers C."/>
            <person name="Nakajima M."/>
            <person name="Narusaka M."/>
            <person name="Seki M."/>
            <person name="Sakurai T."/>
            <person name="Satou M."/>
            <person name="Tamse R."/>
            <person name="Vaysberg M."/>
            <person name="Wallender E.K."/>
            <person name="Wong C."/>
            <person name="Yamamura Y."/>
            <person name="Yuan S."/>
            <person name="Shinozaki K."/>
            <person name="Davis R.W."/>
            <person name="Theologis A."/>
            <person name="Ecker J.R."/>
        </authorList>
    </citation>
    <scope>NUCLEOTIDE SEQUENCE [LARGE SCALE MRNA]</scope>
    <source>
        <strain>cv. Columbia</strain>
    </source>
</reference>
<reference key="4">
    <citation type="submission" date="2005-03" db="EMBL/GenBank/DDBJ databases">
        <title>Large-scale analysis of RIKEN Arabidopsis full-length (RAFL) cDNAs.</title>
        <authorList>
            <person name="Totoki Y."/>
            <person name="Seki M."/>
            <person name="Ishida J."/>
            <person name="Nakajima M."/>
            <person name="Enju A."/>
            <person name="Kamiya A."/>
            <person name="Narusaka M."/>
            <person name="Shin-i T."/>
            <person name="Nakagawa M."/>
            <person name="Sakamoto N."/>
            <person name="Oishi K."/>
            <person name="Kohara Y."/>
            <person name="Kobayashi M."/>
            <person name="Toyoda A."/>
            <person name="Sakaki Y."/>
            <person name="Sakurai T."/>
            <person name="Iida K."/>
            <person name="Akiyama K."/>
            <person name="Satou M."/>
            <person name="Toyoda T."/>
            <person name="Konagaya A."/>
            <person name="Carninci P."/>
            <person name="Kawai J."/>
            <person name="Hayashizaki Y."/>
            <person name="Shinozaki K."/>
        </authorList>
    </citation>
    <scope>NUCLEOTIDE SEQUENCE [LARGE SCALE MRNA] OF 549-628</scope>
    <source>
        <strain>cv. Columbia</strain>
    </source>
</reference>
<reference key="5">
    <citation type="journal article" date="1999" name="Biochim. Biophys. Acta">
        <title>A family of Arabidopsis plasma membrane receptors presenting animal beta-integrin domains.</title>
        <authorList>
            <person name="Laval V."/>
            <person name="Chabannes M."/>
            <person name="Carriere M."/>
            <person name="Canut H."/>
            <person name="Barre A."/>
            <person name="Rouge P."/>
            <person name="Pont-Lezica R."/>
            <person name="Galaud J.-P."/>
        </authorList>
    </citation>
    <scope>TISSUE SPECIFICITY</scope>
</reference>
<reference key="6">
    <citation type="journal article" date="2000" name="Electrophoresis">
        <title>A proteomic analysis of organelles from Arabidopsis thaliana.</title>
        <authorList>
            <person name="Prime T.A."/>
            <person name="Sherrier D.J."/>
            <person name="Mahon P."/>
            <person name="Packman L.C."/>
            <person name="Dupree P."/>
        </authorList>
    </citation>
    <scope>SUBCELLULAR LOCATION</scope>
</reference>
<reference key="7">
    <citation type="journal article" date="2003" name="J. Exp. Bot.">
        <title>Seed germination is blocked in Arabidopsis putative vacuolar sorting receptor (atbp80) antisense transformants.</title>
        <authorList>
            <person name="Laval V."/>
            <person name="Masclaux F."/>
            <person name="Serin A."/>
            <person name="Carriere M."/>
            <person name="Roldan C."/>
            <person name="Devic M."/>
            <person name="Pont-Lezica R.F."/>
            <person name="Galaud J.-P."/>
        </authorList>
    </citation>
    <scope>TISSUE SPECIFICITY</scope>
</reference>
<reference key="8">
    <citation type="journal article" date="2003" name="Proc. Natl. Acad. Sci. U.S.A.">
        <title>Vacuolar sorting receptor for seed storage proteins in Arabidopsis thaliana.</title>
        <authorList>
            <person name="Shimada T."/>
            <person name="Fuji K."/>
            <person name="Tamura K."/>
            <person name="Kondo M."/>
            <person name="Nishimura M."/>
            <person name="Hara-Nishimura I."/>
        </authorList>
    </citation>
    <scope>GENE FAMILY</scope>
    <scope>NOMENCLATURE</scope>
</reference>
<protein>
    <recommendedName>
        <fullName>Vacuolar-sorting receptor 4</fullName>
        <shortName>AtVSR4</shortName>
    </recommendedName>
    <alternativeName>
        <fullName>BP80-like protein a</fullName>
        <shortName>AtBP80a</shortName>
    </alternativeName>
    <alternativeName>
        <fullName>Epidermal growth factor receptor-like protein 2b</fullName>
        <shortName>AtELP2b</shortName>
    </alternativeName>
</protein>